<keyword id="KW-0963">Cytoplasm</keyword>
<keyword id="KW-0249">Electron transport</keyword>
<keyword id="KW-0285">Flavoprotein</keyword>
<keyword id="KW-0288">FMN</keyword>
<keyword id="KW-0408">Iron</keyword>
<keyword id="KW-0479">Metal-binding</keyword>
<keyword id="KW-0560">Oxidoreductase</keyword>
<keyword id="KW-0813">Transport</keyword>
<name>NORV_SALTI</name>
<proteinExistence type="inferred from homology"/>
<reference key="1">
    <citation type="journal article" date="2001" name="Nature">
        <title>Complete genome sequence of a multiple drug resistant Salmonella enterica serovar Typhi CT18.</title>
        <authorList>
            <person name="Parkhill J."/>
            <person name="Dougan G."/>
            <person name="James K.D."/>
            <person name="Thomson N.R."/>
            <person name="Pickard D."/>
            <person name="Wain J."/>
            <person name="Churcher C.M."/>
            <person name="Mungall K.L."/>
            <person name="Bentley S.D."/>
            <person name="Holden M.T.G."/>
            <person name="Sebaihia M."/>
            <person name="Baker S."/>
            <person name="Basham D."/>
            <person name="Brooks K."/>
            <person name="Chillingworth T."/>
            <person name="Connerton P."/>
            <person name="Cronin A."/>
            <person name="Davis P."/>
            <person name="Davies R.M."/>
            <person name="Dowd L."/>
            <person name="White N."/>
            <person name="Farrar J."/>
            <person name="Feltwell T."/>
            <person name="Hamlin N."/>
            <person name="Haque A."/>
            <person name="Hien T.T."/>
            <person name="Holroyd S."/>
            <person name="Jagels K."/>
            <person name="Krogh A."/>
            <person name="Larsen T.S."/>
            <person name="Leather S."/>
            <person name="Moule S."/>
            <person name="O'Gaora P."/>
            <person name="Parry C."/>
            <person name="Quail M.A."/>
            <person name="Rutherford K.M."/>
            <person name="Simmonds M."/>
            <person name="Skelton J."/>
            <person name="Stevens K."/>
            <person name="Whitehead S."/>
            <person name="Barrell B.G."/>
        </authorList>
    </citation>
    <scope>NUCLEOTIDE SEQUENCE [LARGE SCALE GENOMIC DNA]</scope>
    <source>
        <strain>CT18</strain>
    </source>
</reference>
<reference key="2">
    <citation type="journal article" date="2003" name="J. Bacteriol.">
        <title>Comparative genomics of Salmonella enterica serovar Typhi strains Ty2 and CT18.</title>
        <authorList>
            <person name="Deng W."/>
            <person name="Liou S.-R."/>
            <person name="Plunkett G. III"/>
            <person name="Mayhew G.F."/>
            <person name="Rose D.J."/>
            <person name="Burland V."/>
            <person name="Kodoyianni V."/>
            <person name="Schwartz D.C."/>
            <person name="Blattner F.R."/>
        </authorList>
    </citation>
    <scope>NUCLEOTIDE SEQUENCE [LARGE SCALE GENOMIC DNA]</scope>
    <source>
        <strain>ATCC 700931 / Ty2</strain>
    </source>
</reference>
<organism>
    <name type="scientific">Salmonella typhi</name>
    <dbReference type="NCBI Taxonomy" id="90370"/>
    <lineage>
        <taxon>Bacteria</taxon>
        <taxon>Pseudomonadati</taxon>
        <taxon>Pseudomonadota</taxon>
        <taxon>Gammaproteobacteria</taxon>
        <taxon>Enterobacterales</taxon>
        <taxon>Enterobacteriaceae</taxon>
        <taxon>Salmonella</taxon>
    </lineage>
</organism>
<dbReference type="EMBL" id="AL513382">
    <property type="protein sequence ID" value="CAD05947.1"/>
    <property type="molecule type" value="Genomic_DNA"/>
</dbReference>
<dbReference type="EMBL" id="AE014613">
    <property type="protein sequence ID" value="AAO70303.1"/>
    <property type="molecule type" value="Genomic_DNA"/>
</dbReference>
<dbReference type="RefSeq" id="NP_457234.1">
    <property type="nucleotide sequence ID" value="NC_003198.1"/>
</dbReference>
<dbReference type="RefSeq" id="WP_000025997.1">
    <property type="nucleotide sequence ID" value="NZ_WSUR01000005.1"/>
</dbReference>
<dbReference type="SMR" id="Q8Z4C5"/>
<dbReference type="STRING" id="220341.gene:17586857"/>
<dbReference type="KEGG" id="stt:t2742"/>
<dbReference type="KEGG" id="sty:STY2962"/>
<dbReference type="PATRIC" id="fig|220341.7.peg.3016"/>
<dbReference type="eggNOG" id="COG0426">
    <property type="taxonomic scope" value="Bacteria"/>
</dbReference>
<dbReference type="eggNOG" id="COG1773">
    <property type="taxonomic scope" value="Bacteria"/>
</dbReference>
<dbReference type="HOGENOM" id="CLU_017490_0_1_6"/>
<dbReference type="OMA" id="PNTPIYC"/>
<dbReference type="OrthoDB" id="9800607at2"/>
<dbReference type="UniPathway" id="UPA00638"/>
<dbReference type="Proteomes" id="UP000000541">
    <property type="component" value="Chromosome"/>
</dbReference>
<dbReference type="Proteomes" id="UP000002670">
    <property type="component" value="Chromosome"/>
</dbReference>
<dbReference type="GO" id="GO:0005737">
    <property type="term" value="C:cytoplasm"/>
    <property type="evidence" value="ECO:0007669"/>
    <property type="project" value="UniProtKB-SubCell"/>
</dbReference>
<dbReference type="GO" id="GO:0009055">
    <property type="term" value="F:electron transfer activity"/>
    <property type="evidence" value="ECO:0007669"/>
    <property type="project" value="UniProtKB-UniRule"/>
</dbReference>
<dbReference type="GO" id="GO:0010181">
    <property type="term" value="F:FMN binding"/>
    <property type="evidence" value="ECO:0007669"/>
    <property type="project" value="InterPro"/>
</dbReference>
<dbReference type="GO" id="GO:0005506">
    <property type="term" value="F:iron ion binding"/>
    <property type="evidence" value="ECO:0007669"/>
    <property type="project" value="InterPro"/>
</dbReference>
<dbReference type="GO" id="GO:0016966">
    <property type="term" value="F:nitric oxide reductase activity"/>
    <property type="evidence" value="ECO:0007669"/>
    <property type="project" value="InterPro"/>
</dbReference>
<dbReference type="CDD" id="cd07709">
    <property type="entry name" value="flavodiiron_proteins_MBL-fold"/>
    <property type="match status" value="1"/>
</dbReference>
<dbReference type="CDD" id="cd00730">
    <property type="entry name" value="rubredoxin"/>
    <property type="match status" value="1"/>
</dbReference>
<dbReference type="FunFam" id="3.40.50.360:FF:000012">
    <property type="entry name" value="Anaerobic nitric oxide reductase flavorubredoxin"/>
    <property type="match status" value="1"/>
</dbReference>
<dbReference type="FunFam" id="3.60.15.10:FF:000009">
    <property type="entry name" value="Anaerobic nitric oxide reductase flavorubredoxin"/>
    <property type="match status" value="1"/>
</dbReference>
<dbReference type="Gene3D" id="2.20.28.10">
    <property type="match status" value="1"/>
</dbReference>
<dbReference type="Gene3D" id="3.40.50.360">
    <property type="match status" value="1"/>
</dbReference>
<dbReference type="Gene3D" id="3.60.15.10">
    <property type="entry name" value="Ribonuclease Z/Hydroxyacylglutathione hydrolase-like"/>
    <property type="match status" value="1"/>
</dbReference>
<dbReference type="HAMAP" id="MF_01312">
    <property type="entry name" value="NorV"/>
    <property type="match status" value="1"/>
</dbReference>
<dbReference type="InterPro" id="IPR023957">
    <property type="entry name" value="Anaer_NO_rdtase_flvorubredoxin"/>
</dbReference>
<dbReference type="InterPro" id="IPR008254">
    <property type="entry name" value="Flavodoxin/NO_synth"/>
</dbReference>
<dbReference type="InterPro" id="IPR029039">
    <property type="entry name" value="Flavoprotein-like_sf"/>
</dbReference>
<dbReference type="InterPro" id="IPR001279">
    <property type="entry name" value="Metallo-B-lactamas"/>
</dbReference>
<dbReference type="InterPro" id="IPR045761">
    <property type="entry name" value="ODP_dom"/>
</dbReference>
<dbReference type="InterPro" id="IPR036866">
    <property type="entry name" value="RibonucZ/Hydroxyglut_hydro"/>
</dbReference>
<dbReference type="InterPro" id="IPR024934">
    <property type="entry name" value="Rubredoxin-like_dom"/>
</dbReference>
<dbReference type="InterPro" id="IPR016440">
    <property type="entry name" value="Rubredoxin-O_OxRdtase"/>
</dbReference>
<dbReference type="InterPro" id="IPR024935">
    <property type="entry name" value="Rubredoxin_dom"/>
</dbReference>
<dbReference type="NCBIfam" id="NF003954">
    <property type="entry name" value="PRK05452.1"/>
    <property type="match status" value="1"/>
</dbReference>
<dbReference type="PANTHER" id="PTHR43717">
    <property type="entry name" value="ANAEROBIC NITRIC OXIDE REDUCTASE FLAVORUBREDOXIN"/>
    <property type="match status" value="1"/>
</dbReference>
<dbReference type="PANTHER" id="PTHR43717:SF1">
    <property type="entry name" value="ANAEROBIC NITRIC OXIDE REDUCTASE FLAVORUBREDOXIN"/>
    <property type="match status" value="1"/>
</dbReference>
<dbReference type="Pfam" id="PF00258">
    <property type="entry name" value="Flavodoxin_1"/>
    <property type="match status" value="1"/>
</dbReference>
<dbReference type="Pfam" id="PF19583">
    <property type="entry name" value="ODP"/>
    <property type="match status" value="1"/>
</dbReference>
<dbReference type="Pfam" id="PF00301">
    <property type="entry name" value="Rubredoxin"/>
    <property type="match status" value="1"/>
</dbReference>
<dbReference type="PIRSF" id="PIRSF005243">
    <property type="entry name" value="ROO"/>
    <property type="match status" value="1"/>
</dbReference>
<dbReference type="PRINTS" id="PR00163">
    <property type="entry name" value="RUBREDOXIN"/>
</dbReference>
<dbReference type="SMART" id="SM00849">
    <property type="entry name" value="Lactamase_B"/>
    <property type="match status" value="1"/>
</dbReference>
<dbReference type="SUPFAM" id="SSF52218">
    <property type="entry name" value="Flavoproteins"/>
    <property type="match status" value="1"/>
</dbReference>
<dbReference type="SUPFAM" id="SSF56281">
    <property type="entry name" value="Metallo-hydrolase/oxidoreductase"/>
    <property type="match status" value="1"/>
</dbReference>
<dbReference type="SUPFAM" id="SSF57802">
    <property type="entry name" value="Rubredoxin-like"/>
    <property type="match status" value="1"/>
</dbReference>
<dbReference type="PROSITE" id="PS50902">
    <property type="entry name" value="FLAVODOXIN_LIKE"/>
    <property type="match status" value="1"/>
</dbReference>
<dbReference type="PROSITE" id="PS50903">
    <property type="entry name" value="RUBREDOXIN_LIKE"/>
    <property type="match status" value="1"/>
</dbReference>
<gene>
    <name evidence="1" type="primary">norV</name>
    <name evidence="1" type="synonym">flrD</name>
    <name type="ordered locus">STY2962</name>
    <name type="ordered locus">t2742</name>
</gene>
<sequence>MSILVKNNIHWVGQRDWEVRDFHGTEYKTLRGSSYNSYLIREEKNVLIDTVDHKFSREFVQNLRSEIDLADIDYIIINHAEEDHAGALTELMAQIPDTPIYCTANAIDSINGHHHHPEWNFKVVKTGDTLDIGDGKQLIFVETPMLHWPDSMMTYMTGDAVLFSNDAFGQHYCDEHLFNDEVDQTELFEQCQRYYANILTPFSRLVTPKITEILGFNLPVDMIATSHGVVWRDNPTQIVELYLKWAADYQEDRITIFYDTMSNNTRMMADAIAQGINEVDPNVAVKIFNVARSDKNEILTNVFRSKGVLVGTSTMNNVMMPKIAGLVEEMTGLRFRNKRASAFGSHGWSGGAVDRLSTRLQDAGFEMSLSLKAKWRPDLDALELCRQHGRDIARQWALAPLPETTQKTAPVEETTTCTAADLGPKMQCSVCQWIYDPALGEPLQDVAPGTPWSDVPDNFLCPECSLGKDVFDVLATEAK</sequence>
<feature type="chain" id="PRO_0000216788" description="Anaerobic nitric oxide reductase flavorubredoxin">
    <location>
        <begin position="1"/>
        <end position="479"/>
    </location>
</feature>
<feature type="domain" description="Flavodoxin-like" evidence="1">
    <location>
        <begin position="254"/>
        <end position="393"/>
    </location>
</feature>
<feature type="domain" description="Rubredoxin-like" evidence="1">
    <location>
        <begin position="423"/>
        <end position="474"/>
    </location>
</feature>
<feature type="region of interest" description="Zinc metallo-hydrolase">
    <location>
        <begin position="30"/>
        <end position="210"/>
    </location>
</feature>
<feature type="binding site" evidence="1">
    <location>
        <position position="79"/>
    </location>
    <ligand>
        <name>Fe cation</name>
        <dbReference type="ChEBI" id="CHEBI:24875"/>
        <label>1</label>
    </ligand>
</feature>
<feature type="binding site" evidence="1">
    <location>
        <position position="81"/>
    </location>
    <ligand>
        <name>Fe cation</name>
        <dbReference type="ChEBI" id="CHEBI:24875"/>
        <label>1</label>
    </ligand>
</feature>
<feature type="binding site" evidence="1">
    <location>
        <position position="83"/>
    </location>
    <ligand>
        <name>Fe cation</name>
        <dbReference type="ChEBI" id="CHEBI:24875"/>
        <label>2</label>
    </ligand>
</feature>
<feature type="binding site" evidence="1">
    <location>
        <position position="147"/>
    </location>
    <ligand>
        <name>Fe cation</name>
        <dbReference type="ChEBI" id="CHEBI:24875"/>
        <label>1</label>
    </ligand>
</feature>
<feature type="binding site" evidence="1">
    <location>
        <position position="166"/>
    </location>
    <ligand>
        <name>Fe cation</name>
        <dbReference type="ChEBI" id="CHEBI:24875"/>
        <label>1</label>
    </ligand>
</feature>
<feature type="binding site" evidence="1">
    <location>
        <position position="166"/>
    </location>
    <ligand>
        <name>Fe cation</name>
        <dbReference type="ChEBI" id="CHEBI:24875"/>
        <label>2</label>
    </ligand>
</feature>
<feature type="binding site" evidence="1">
    <location>
        <position position="227"/>
    </location>
    <ligand>
        <name>Fe cation</name>
        <dbReference type="ChEBI" id="CHEBI:24875"/>
        <label>2</label>
    </ligand>
</feature>
<feature type="binding site" evidence="1">
    <location>
        <begin position="260"/>
        <end position="264"/>
    </location>
    <ligand>
        <name>FMN</name>
        <dbReference type="ChEBI" id="CHEBI:58210"/>
    </ligand>
</feature>
<feature type="binding site" evidence="1">
    <location>
        <begin position="342"/>
        <end position="369"/>
    </location>
    <ligand>
        <name>FMN</name>
        <dbReference type="ChEBI" id="CHEBI:58210"/>
    </ligand>
</feature>
<feature type="binding site" evidence="1">
    <location>
        <position position="428"/>
    </location>
    <ligand>
        <name>Fe cation</name>
        <dbReference type="ChEBI" id="CHEBI:24875"/>
        <label>3</label>
    </ligand>
</feature>
<feature type="binding site" evidence="1">
    <location>
        <position position="431"/>
    </location>
    <ligand>
        <name>Fe cation</name>
        <dbReference type="ChEBI" id="CHEBI:24875"/>
        <label>3</label>
    </ligand>
</feature>
<feature type="binding site" evidence="1">
    <location>
        <position position="461"/>
    </location>
    <ligand>
        <name>Fe cation</name>
        <dbReference type="ChEBI" id="CHEBI:24875"/>
        <label>3</label>
    </ligand>
</feature>
<feature type="binding site" evidence="1">
    <location>
        <position position="464"/>
    </location>
    <ligand>
        <name>Fe cation</name>
        <dbReference type="ChEBI" id="CHEBI:24875"/>
        <label>3</label>
    </ligand>
</feature>
<protein>
    <recommendedName>
        <fullName evidence="1">Anaerobic nitric oxide reductase flavorubredoxin</fullName>
        <shortName evidence="1">FlRd</shortName>
        <shortName evidence="1">FlavoRb</shortName>
    </recommendedName>
</protein>
<accession>Q8Z4C5</accession>
<comment type="function">
    <text evidence="1">Anaerobic nitric oxide reductase; uses NADH to detoxify nitric oxide (NO), protecting several 4Fe-4S NO-sensitive enzymes. Has at least 2 reductase partners, only one of which (NorW, flavorubredoxin reductase) has been identified. NO probably binds to the di-iron center; electrons enter from the NorW at rubredoxin and are transferred sequentially to the FMN center and the di-iron center. Also able to function as an aerobic oxygen reductase.</text>
</comment>
<comment type="cofactor">
    <cofactor evidence="1">
        <name>Fe cation</name>
        <dbReference type="ChEBI" id="CHEBI:24875"/>
    </cofactor>
    <text evidence="1">Binds 3 Fe cations per monomer.</text>
</comment>
<comment type="cofactor">
    <cofactor evidence="1">
        <name>FMN</name>
        <dbReference type="ChEBI" id="CHEBI:58210"/>
    </cofactor>
    <text evidence="1">Binds 1 FMN per monomer.</text>
</comment>
<comment type="pathway">
    <text evidence="1">Nitrogen metabolism; nitric oxide reduction.</text>
</comment>
<comment type="subunit">
    <text evidence="1">Homotetramer.</text>
</comment>
<comment type="subcellular location">
    <subcellularLocation>
        <location evidence="1">Cytoplasm</location>
    </subcellularLocation>
</comment>
<comment type="similarity">
    <text evidence="1">In the N-terminal section; belongs to the zinc metallo-hydrolase group 3 family.</text>
</comment>
<evidence type="ECO:0000255" key="1">
    <source>
        <dbReference type="HAMAP-Rule" id="MF_01312"/>
    </source>
</evidence>